<evidence type="ECO:0000255" key="1">
    <source>
        <dbReference type="HAMAP-Rule" id="MF_01082"/>
    </source>
</evidence>
<gene>
    <name evidence="1" type="primary">truD</name>
    <name type="ordered locus">HH_1515</name>
</gene>
<proteinExistence type="inferred from homology"/>
<sequence>MSPHLPQFTNISRIYPFTHTPIECYFNTSPRDFVIKEIPLYEPSGSGEHLLLYVRKKGLSTFELLNILSSSLGCRVRDIGYAGLKDKAATSYQYLSIHRSLQNRLESALPHLHSQHIKILTITPHNHKLKIGHLKGNSFFMRLKKVSSNNATKLHSTLELLAHSGFPNYFGNQRFGKEGDNFQSGKAISEHKLTLKNKKISNFLISSYQSHLFNAWLSSRIQLAQILRSFKPNEVLRALQSPNFPTLHTFAKSCTPQLIKTLQSQKQPFVILQGDIMCHYPFGKNFVCDDTLIESTRFLQKDIAPTGALCGTKFTHSKCLAYDIEEQFLDSQIKANGTRRYAWVWAENIEGRYIPQEAHFELHFHLPKGSYATIFLESLLSTHNC</sequence>
<accession>P59892</accession>
<protein>
    <recommendedName>
        <fullName evidence="1">tRNA pseudouridine synthase D</fullName>
        <ecNumber evidence="1">5.4.99.27</ecNumber>
    </recommendedName>
    <alternativeName>
        <fullName evidence="1">tRNA pseudouridine(13) synthase</fullName>
    </alternativeName>
    <alternativeName>
        <fullName evidence="1">tRNA pseudouridylate synthase D</fullName>
    </alternativeName>
    <alternativeName>
        <fullName evidence="1">tRNA-uridine isomerase D</fullName>
    </alternativeName>
</protein>
<organism>
    <name type="scientific">Helicobacter hepaticus (strain ATCC 51449 / 3B1)</name>
    <dbReference type="NCBI Taxonomy" id="235279"/>
    <lineage>
        <taxon>Bacteria</taxon>
        <taxon>Pseudomonadati</taxon>
        <taxon>Campylobacterota</taxon>
        <taxon>Epsilonproteobacteria</taxon>
        <taxon>Campylobacterales</taxon>
        <taxon>Helicobacteraceae</taxon>
        <taxon>Helicobacter</taxon>
    </lineage>
</organism>
<comment type="function">
    <text evidence="1">Responsible for synthesis of pseudouridine from uracil-13 in transfer RNAs.</text>
</comment>
<comment type="catalytic activity">
    <reaction evidence="1">
        <text>uridine(13) in tRNA = pseudouridine(13) in tRNA</text>
        <dbReference type="Rhea" id="RHEA:42540"/>
        <dbReference type="Rhea" id="RHEA-COMP:10105"/>
        <dbReference type="Rhea" id="RHEA-COMP:10106"/>
        <dbReference type="ChEBI" id="CHEBI:65314"/>
        <dbReference type="ChEBI" id="CHEBI:65315"/>
        <dbReference type="EC" id="5.4.99.27"/>
    </reaction>
</comment>
<comment type="similarity">
    <text evidence="1">Belongs to the pseudouridine synthase TruD family.</text>
</comment>
<keyword id="KW-0413">Isomerase</keyword>
<keyword id="KW-1185">Reference proteome</keyword>
<keyword id="KW-0819">tRNA processing</keyword>
<reference key="1">
    <citation type="journal article" date="2003" name="Proc. Natl. Acad. Sci. U.S.A.">
        <title>The complete genome sequence of the carcinogenic bacterium Helicobacter hepaticus.</title>
        <authorList>
            <person name="Suerbaum S."/>
            <person name="Josenhans C."/>
            <person name="Sterzenbach T."/>
            <person name="Drescher B."/>
            <person name="Brandt P."/>
            <person name="Bell M."/>
            <person name="Droege M."/>
            <person name="Fartmann B."/>
            <person name="Fischer H.-P."/>
            <person name="Ge Z."/>
            <person name="Hoerster A."/>
            <person name="Holland R."/>
            <person name="Klein K."/>
            <person name="Koenig J."/>
            <person name="Macko L."/>
            <person name="Mendz G.L."/>
            <person name="Nyakatura G."/>
            <person name="Schauer D.B."/>
            <person name="Shen Z."/>
            <person name="Weber J."/>
            <person name="Frosch M."/>
            <person name="Fox J.G."/>
        </authorList>
    </citation>
    <scope>NUCLEOTIDE SEQUENCE [LARGE SCALE GENOMIC DNA]</scope>
    <source>
        <strain>ATCC 51449 / 3B1</strain>
    </source>
</reference>
<dbReference type="EC" id="5.4.99.27" evidence="1"/>
<dbReference type="EMBL" id="AE017125">
    <property type="protein sequence ID" value="AAP78112.1"/>
    <property type="molecule type" value="Genomic_DNA"/>
</dbReference>
<dbReference type="RefSeq" id="WP_011116355.1">
    <property type="nucleotide sequence ID" value="NC_004917.1"/>
</dbReference>
<dbReference type="SMR" id="P59892"/>
<dbReference type="STRING" id="235279.HH_1515"/>
<dbReference type="KEGG" id="hhe:HH_1515"/>
<dbReference type="eggNOG" id="COG0585">
    <property type="taxonomic scope" value="Bacteria"/>
</dbReference>
<dbReference type="HOGENOM" id="CLU_005281_4_0_7"/>
<dbReference type="OrthoDB" id="1550679at2"/>
<dbReference type="Proteomes" id="UP000002495">
    <property type="component" value="Chromosome"/>
</dbReference>
<dbReference type="GO" id="GO:0005829">
    <property type="term" value="C:cytosol"/>
    <property type="evidence" value="ECO:0007669"/>
    <property type="project" value="TreeGrafter"/>
</dbReference>
<dbReference type="GO" id="GO:0003723">
    <property type="term" value="F:RNA binding"/>
    <property type="evidence" value="ECO:0007669"/>
    <property type="project" value="InterPro"/>
</dbReference>
<dbReference type="GO" id="GO:0160150">
    <property type="term" value="F:tRNA pseudouridine(13) synthase activity"/>
    <property type="evidence" value="ECO:0007669"/>
    <property type="project" value="UniProtKB-EC"/>
</dbReference>
<dbReference type="GO" id="GO:0031119">
    <property type="term" value="P:tRNA pseudouridine synthesis"/>
    <property type="evidence" value="ECO:0007669"/>
    <property type="project" value="UniProtKB-UniRule"/>
</dbReference>
<dbReference type="CDD" id="cd02575">
    <property type="entry name" value="PseudoU_synth_EcTruD"/>
    <property type="match status" value="1"/>
</dbReference>
<dbReference type="Gene3D" id="3.30.2350.20">
    <property type="entry name" value="TruD, catalytic domain"/>
    <property type="match status" value="1"/>
</dbReference>
<dbReference type="HAMAP" id="MF_01082">
    <property type="entry name" value="TruD"/>
    <property type="match status" value="1"/>
</dbReference>
<dbReference type="InterPro" id="IPR020103">
    <property type="entry name" value="PsdUridine_synth_cat_dom_sf"/>
</dbReference>
<dbReference type="InterPro" id="IPR001656">
    <property type="entry name" value="PsdUridine_synth_TruD"/>
</dbReference>
<dbReference type="InterPro" id="IPR020119">
    <property type="entry name" value="PsdUridine_synth_TruD_CS"/>
</dbReference>
<dbReference type="InterPro" id="IPR011760">
    <property type="entry name" value="PsdUridine_synth_TruD_insert"/>
</dbReference>
<dbReference type="InterPro" id="IPR042214">
    <property type="entry name" value="TruD_catalytic"/>
</dbReference>
<dbReference type="InterPro" id="IPR050170">
    <property type="entry name" value="TruD_pseudoU_synthase"/>
</dbReference>
<dbReference type="NCBIfam" id="NF002154">
    <property type="entry name" value="PRK00984.1-3"/>
    <property type="match status" value="1"/>
</dbReference>
<dbReference type="NCBIfam" id="TIGR00094">
    <property type="entry name" value="tRNA_TruD_broad"/>
    <property type="match status" value="1"/>
</dbReference>
<dbReference type="PANTHER" id="PTHR47811">
    <property type="entry name" value="TRNA PSEUDOURIDINE SYNTHASE D"/>
    <property type="match status" value="1"/>
</dbReference>
<dbReference type="PANTHER" id="PTHR47811:SF1">
    <property type="entry name" value="TRNA PSEUDOURIDINE SYNTHASE D"/>
    <property type="match status" value="1"/>
</dbReference>
<dbReference type="Pfam" id="PF01142">
    <property type="entry name" value="TruD"/>
    <property type="match status" value="2"/>
</dbReference>
<dbReference type="PIRSF" id="PIRSF037016">
    <property type="entry name" value="Pseudouridin_synth_euk_prd"/>
    <property type="match status" value="1"/>
</dbReference>
<dbReference type="SUPFAM" id="SSF55120">
    <property type="entry name" value="Pseudouridine synthase"/>
    <property type="match status" value="1"/>
</dbReference>
<dbReference type="PROSITE" id="PS50984">
    <property type="entry name" value="TRUD"/>
    <property type="match status" value="1"/>
</dbReference>
<dbReference type="PROSITE" id="PS01268">
    <property type="entry name" value="UPF0024"/>
    <property type="match status" value="1"/>
</dbReference>
<feature type="chain" id="PRO_0000152501" description="tRNA pseudouridine synthase D">
    <location>
        <begin position="1"/>
        <end position="385"/>
    </location>
</feature>
<feature type="domain" description="TRUD" evidence="1">
    <location>
        <begin position="165"/>
        <end position="305"/>
    </location>
</feature>
<feature type="active site" description="Nucleophile" evidence="1">
    <location>
        <position position="86"/>
    </location>
</feature>
<name>TRUD_HELHP</name>